<protein>
    <recommendedName>
        <fullName evidence="6">Ubiquinol oxidase 1b, mitochondrial</fullName>
        <ecNumber evidence="2">1.10.3.11</ecNumber>
    </recommendedName>
    <alternativeName>
        <fullName evidence="5">Alternative oxidase 1b</fullName>
        <shortName evidence="5">OsAOX1B</shortName>
    </alternativeName>
</protein>
<gene>
    <name evidence="5" type="primary">AOX1B</name>
    <name evidence="7" type="ordered locus">Os04g0600300</name>
    <name evidence="6" type="ordered locus">LOC_Os04g51160</name>
    <name evidence="9" type="ORF">OsJ_16033</name>
    <name evidence="8" type="ORF">OSJNBa0083N12.12</name>
</gene>
<accession>O82766</accession>
<accession>Q7XPT1</accession>
<sequence length="335" mass="37251">MSSRMAGATLLRHLGPRLFAAEPVYSGLAASARGVMPAAARIFPARMASTSSAGADVKEGAAEKLPEPAATAAAAATDPQNKKAVVSYWGIQPPKLVKEDGTEWKWLSFRPWDTYTSDTSIDVTKHHEPKGLPDKLAYWTVRSLAVPRDLFFQRRHASHALLLETVAGVPGMVGGMLLHLRSLRRFEQSGGWIRALLEEAENERMHLMTFLEVMQPRWWERALVLAAQGVFFNAYFVGYLVSPKFAHRFVGYLEEEAVSSYTEYLKDLEAGKIENTPAPAIAIDYWRLPADATLKDVVTVIRADEAHHRDLNHFASDIQQQGMKLKDTPAPIGYH</sequence>
<dbReference type="EC" id="1.10.3.11" evidence="2"/>
<dbReference type="EMBL" id="AB004813">
    <property type="protein sequence ID" value="BAA28771.1"/>
    <property type="molecule type" value="Genomic_DNA"/>
</dbReference>
<dbReference type="EMBL" id="AB004865">
    <property type="protein sequence ID" value="BAA28774.1"/>
    <property type="molecule type" value="mRNA"/>
</dbReference>
<dbReference type="EMBL" id="AL606683">
    <property type="protein sequence ID" value="CAE03472.2"/>
    <property type="molecule type" value="Genomic_DNA"/>
</dbReference>
<dbReference type="EMBL" id="AP008210">
    <property type="protein sequence ID" value="BAF15673.1"/>
    <property type="molecule type" value="Genomic_DNA"/>
</dbReference>
<dbReference type="EMBL" id="AP014960">
    <property type="protein sequence ID" value="BAS90832.1"/>
    <property type="molecule type" value="Genomic_DNA"/>
</dbReference>
<dbReference type="EMBL" id="CM000141">
    <property type="protein sequence ID" value="EAZ31868.1"/>
    <property type="molecule type" value="Genomic_DNA"/>
</dbReference>
<dbReference type="EMBL" id="AK107376">
    <property type="protein sequence ID" value="BAG98037.1"/>
    <property type="molecule type" value="mRNA"/>
</dbReference>
<dbReference type="SMR" id="O82766"/>
<dbReference type="FunCoup" id="O82766">
    <property type="interactions" value="3"/>
</dbReference>
<dbReference type="STRING" id="39947.O82766"/>
<dbReference type="PaxDb" id="39947-O82766"/>
<dbReference type="EnsemblPlants" id="Os04t0600300-01">
    <property type="protein sequence ID" value="Os04t0600300-01"/>
    <property type="gene ID" value="Os04g0600300"/>
</dbReference>
<dbReference type="GeneID" id="4336875"/>
<dbReference type="Gramene" id="Os04t0600300-01">
    <property type="protein sequence ID" value="Os04t0600300-01"/>
    <property type="gene ID" value="Os04g0600300"/>
</dbReference>
<dbReference type="KEGG" id="dosa:Os04g0600300"/>
<dbReference type="KEGG" id="osa:4336875"/>
<dbReference type="eggNOG" id="ENOG502QSB5">
    <property type="taxonomic scope" value="Eukaryota"/>
</dbReference>
<dbReference type="HOGENOM" id="CLU_041974_0_1_1"/>
<dbReference type="InParanoid" id="O82766"/>
<dbReference type="OMA" id="PKWHERA"/>
<dbReference type="OrthoDB" id="16906at2759"/>
<dbReference type="Proteomes" id="UP000000763">
    <property type="component" value="Chromosome 4"/>
</dbReference>
<dbReference type="Proteomes" id="UP000007752">
    <property type="component" value="Chromosome 4"/>
</dbReference>
<dbReference type="Proteomes" id="UP000059680">
    <property type="component" value="Chromosome 4"/>
</dbReference>
<dbReference type="GO" id="GO:0005743">
    <property type="term" value="C:mitochondrial inner membrane"/>
    <property type="evidence" value="ECO:0007669"/>
    <property type="project" value="UniProtKB-SubCell"/>
</dbReference>
<dbReference type="GO" id="GO:0005739">
    <property type="term" value="C:mitochondrion"/>
    <property type="evidence" value="ECO:0000318"/>
    <property type="project" value="GO_Central"/>
</dbReference>
<dbReference type="GO" id="GO:0009916">
    <property type="term" value="F:alternative oxidase activity"/>
    <property type="evidence" value="ECO:0000318"/>
    <property type="project" value="GO_Central"/>
</dbReference>
<dbReference type="GO" id="GO:0046872">
    <property type="term" value="F:metal ion binding"/>
    <property type="evidence" value="ECO:0007669"/>
    <property type="project" value="UniProtKB-KW"/>
</dbReference>
<dbReference type="GO" id="GO:0106292">
    <property type="term" value="F:superoxide-generating NADPH oxidase activity"/>
    <property type="evidence" value="ECO:0007669"/>
    <property type="project" value="UniProtKB-ARBA"/>
</dbReference>
<dbReference type="GO" id="GO:0102721">
    <property type="term" value="F:ubiquinol:oxygen oxidoreductase activity"/>
    <property type="evidence" value="ECO:0007669"/>
    <property type="project" value="UniProtKB-EC"/>
</dbReference>
<dbReference type="GO" id="GO:0010230">
    <property type="term" value="P:alternative respiration"/>
    <property type="evidence" value="ECO:0000318"/>
    <property type="project" value="GO_Central"/>
</dbReference>
<dbReference type="CDD" id="cd01053">
    <property type="entry name" value="AOX"/>
    <property type="match status" value="1"/>
</dbReference>
<dbReference type="FunFam" id="1.20.1260.140:FF:000001">
    <property type="entry name" value="Ubiquinol oxidase"/>
    <property type="match status" value="1"/>
</dbReference>
<dbReference type="Gene3D" id="1.20.1260.140">
    <property type="entry name" value="Alternative oxidase"/>
    <property type="match status" value="1"/>
</dbReference>
<dbReference type="InterPro" id="IPR002680">
    <property type="entry name" value="AOX"/>
</dbReference>
<dbReference type="InterPro" id="IPR038659">
    <property type="entry name" value="AOX_sf"/>
</dbReference>
<dbReference type="PANTHER" id="PTHR31803">
    <property type="entry name" value="ALTERNATIVE OXIDASE"/>
    <property type="match status" value="1"/>
</dbReference>
<dbReference type="PANTHER" id="PTHR31803:SF8">
    <property type="entry name" value="UBIQUINOL OXIDASE 1B, MITOCHONDRIAL"/>
    <property type="match status" value="1"/>
</dbReference>
<dbReference type="Pfam" id="PF01786">
    <property type="entry name" value="AOX"/>
    <property type="match status" value="1"/>
</dbReference>
<comment type="function">
    <text evidence="2">Catalyzes the cyanide-resistant oxidation of ubiquinol and the reduction of molecular oxygen to water, but does not translocate protons and consequently is not linked to oxidative phosphorylation. May increase respiration when the cytochrome respiratory pathway is restricted, or in response to low temperatures.</text>
</comment>
<comment type="catalytic activity">
    <reaction evidence="2">
        <text>2 a ubiquinol + O2 = 2 a ubiquinone + 2 H2O</text>
        <dbReference type="Rhea" id="RHEA:30255"/>
        <dbReference type="Rhea" id="RHEA-COMP:9565"/>
        <dbReference type="Rhea" id="RHEA-COMP:9566"/>
        <dbReference type="ChEBI" id="CHEBI:15377"/>
        <dbReference type="ChEBI" id="CHEBI:15379"/>
        <dbReference type="ChEBI" id="CHEBI:16389"/>
        <dbReference type="ChEBI" id="CHEBI:17976"/>
        <dbReference type="EC" id="1.10.3.11"/>
    </reaction>
</comment>
<comment type="cofactor">
    <cofactor evidence="2">
        <name>Fe cation</name>
        <dbReference type="ChEBI" id="CHEBI:24875"/>
    </cofactor>
    <text evidence="2">Binds 2 iron ions per subunit.</text>
</comment>
<comment type="subcellular location">
    <subcellularLocation>
        <location evidence="6">Mitochondrion inner membrane</location>
        <topology evidence="3">Multi-pass membrane protein</topology>
    </subcellularLocation>
</comment>
<comment type="induction">
    <text evidence="4">Induced by drought, cold and salt stresses, heat shock, hydrogen peroxide and methyl viologen.</text>
</comment>
<comment type="similarity">
    <text evidence="6">Belongs to the alternative oxidase family.</text>
</comment>
<reference key="1">
    <citation type="journal article" date="1997" name="Gene">
        <title>Transcript levels of tandem-arranged alternative oxidase genes in rice are increased by low temperature.</title>
        <authorList>
            <person name="Ito Y."/>
            <person name="Saisho D."/>
            <person name="Nakazono M."/>
            <person name="Tsutsumi N."/>
            <person name="Hirai A."/>
        </authorList>
    </citation>
    <scope>NUCLEOTIDE SEQUENCE [GENOMIC DNA / MRNA]</scope>
    <source>
        <strain>cv. Nipponbare</strain>
    </source>
</reference>
<reference key="2">
    <citation type="journal article" date="2002" name="Nature">
        <title>Sequence and analysis of rice chromosome 4.</title>
        <authorList>
            <person name="Feng Q."/>
            <person name="Zhang Y."/>
            <person name="Hao P."/>
            <person name="Wang S."/>
            <person name="Fu G."/>
            <person name="Huang Y."/>
            <person name="Li Y."/>
            <person name="Zhu J."/>
            <person name="Liu Y."/>
            <person name="Hu X."/>
            <person name="Jia P."/>
            <person name="Zhang Y."/>
            <person name="Zhao Q."/>
            <person name="Ying K."/>
            <person name="Yu S."/>
            <person name="Tang Y."/>
            <person name="Weng Q."/>
            <person name="Zhang L."/>
            <person name="Lu Y."/>
            <person name="Mu J."/>
            <person name="Lu Y."/>
            <person name="Zhang L.S."/>
            <person name="Yu Z."/>
            <person name="Fan D."/>
            <person name="Liu X."/>
            <person name="Lu T."/>
            <person name="Li C."/>
            <person name="Wu Y."/>
            <person name="Sun T."/>
            <person name="Lei H."/>
            <person name="Li T."/>
            <person name="Hu H."/>
            <person name="Guan J."/>
            <person name="Wu M."/>
            <person name="Zhang R."/>
            <person name="Zhou B."/>
            <person name="Chen Z."/>
            <person name="Chen L."/>
            <person name="Jin Z."/>
            <person name="Wang R."/>
            <person name="Yin H."/>
            <person name="Cai Z."/>
            <person name="Ren S."/>
            <person name="Lv G."/>
            <person name="Gu W."/>
            <person name="Zhu G."/>
            <person name="Tu Y."/>
            <person name="Jia J."/>
            <person name="Zhang Y."/>
            <person name="Chen J."/>
            <person name="Kang H."/>
            <person name="Chen X."/>
            <person name="Shao C."/>
            <person name="Sun Y."/>
            <person name="Hu Q."/>
            <person name="Zhang X."/>
            <person name="Zhang W."/>
            <person name="Wang L."/>
            <person name="Ding C."/>
            <person name="Sheng H."/>
            <person name="Gu J."/>
            <person name="Chen S."/>
            <person name="Ni L."/>
            <person name="Zhu F."/>
            <person name="Chen W."/>
            <person name="Lan L."/>
            <person name="Lai Y."/>
            <person name="Cheng Z."/>
            <person name="Gu M."/>
            <person name="Jiang J."/>
            <person name="Li J."/>
            <person name="Hong G."/>
            <person name="Xue Y."/>
            <person name="Han B."/>
        </authorList>
    </citation>
    <scope>NUCLEOTIDE SEQUENCE [LARGE SCALE GENOMIC DNA]</scope>
    <source>
        <strain>cv. Nipponbare</strain>
    </source>
</reference>
<reference key="3">
    <citation type="journal article" date="2005" name="Nature">
        <title>The map-based sequence of the rice genome.</title>
        <authorList>
            <consortium name="International rice genome sequencing project (IRGSP)"/>
        </authorList>
    </citation>
    <scope>NUCLEOTIDE SEQUENCE [LARGE SCALE GENOMIC DNA]</scope>
    <source>
        <strain>cv. Nipponbare</strain>
    </source>
</reference>
<reference key="4">
    <citation type="journal article" date="2008" name="Nucleic Acids Res.">
        <title>The rice annotation project database (RAP-DB): 2008 update.</title>
        <authorList>
            <consortium name="The rice annotation project (RAP)"/>
        </authorList>
    </citation>
    <scope>GENOME REANNOTATION</scope>
    <source>
        <strain>cv. Nipponbare</strain>
    </source>
</reference>
<reference key="5">
    <citation type="journal article" date="2013" name="Rice">
        <title>Improvement of the Oryza sativa Nipponbare reference genome using next generation sequence and optical map data.</title>
        <authorList>
            <person name="Kawahara Y."/>
            <person name="de la Bastide M."/>
            <person name="Hamilton J.P."/>
            <person name="Kanamori H."/>
            <person name="McCombie W.R."/>
            <person name="Ouyang S."/>
            <person name="Schwartz D.C."/>
            <person name="Tanaka T."/>
            <person name="Wu J."/>
            <person name="Zhou S."/>
            <person name="Childs K.L."/>
            <person name="Davidson R.M."/>
            <person name="Lin H."/>
            <person name="Quesada-Ocampo L."/>
            <person name="Vaillancourt B."/>
            <person name="Sakai H."/>
            <person name="Lee S.S."/>
            <person name="Kim J."/>
            <person name="Numa H."/>
            <person name="Itoh T."/>
            <person name="Buell C.R."/>
            <person name="Matsumoto T."/>
        </authorList>
    </citation>
    <scope>GENOME REANNOTATION</scope>
    <source>
        <strain>cv. Nipponbare</strain>
    </source>
</reference>
<reference key="6">
    <citation type="journal article" date="2005" name="PLoS Biol.">
        <title>The genomes of Oryza sativa: a history of duplications.</title>
        <authorList>
            <person name="Yu J."/>
            <person name="Wang J."/>
            <person name="Lin W."/>
            <person name="Li S."/>
            <person name="Li H."/>
            <person name="Zhou J."/>
            <person name="Ni P."/>
            <person name="Dong W."/>
            <person name="Hu S."/>
            <person name="Zeng C."/>
            <person name="Zhang J."/>
            <person name="Zhang Y."/>
            <person name="Li R."/>
            <person name="Xu Z."/>
            <person name="Li S."/>
            <person name="Li X."/>
            <person name="Zheng H."/>
            <person name="Cong L."/>
            <person name="Lin L."/>
            <person name="Yin J."/>
            <person name="Geng J."/>
            <person name="Li G."/>
            <person name="Shi J."/>
            <person name="Liu J."/>
            <person name="Lv H."/>
            <person name="Li J."/>
            <person name="Wang J."/>
            <person name="Deng Y."/>
            <person name="Ran L."/>
            <person name="Shi X."/>
            <person name="Wang X."/>
            <person name="Wu Q."/>
            <person name="Li C."/>
            <person name="Ren X."/>
            <person name="Wang J."/>
            <person name="Wang X."/>
            <person name="Li D."/>
            <person name="Liu D."/>
            <person name="Zhang X."/>
            <person name="Ji Z."/>
            <person name="Zhao W."/>
            <person name="Sun Y."/>
            <person name="Zhang Z."/>
            <person name="Bao J."/>
            <person name="Han Y."/>
            <person name="Dong L."/>
            <person name="Ji J."/>
            <person name="Chen P."/>
            <person name="Wu S."/>
            <person name="Liu J."/>
            <person name="Xiao Y."/>
            <person name="Bu D."/>
            <person name="Tan J."/>
            <person name="Yang L."/>
            <person name="Ye C."/>
            <person name="Zhang J."/>
            <person name="Xu J."/>
            <person name="Zhou Y."/>
            <person name="Yu Y."/>
            <person name="Zhang B."/>
            <person name="Zhuang S."/>
            <person name="Wei H."/>
            <person name="Liu B."/>
            <person name="Lei M."/>
            <person name="Yu H."/>
            <person name="Li Y."/>
            <person name="Xu H."/>
            <person name="Wei S."/>
            <person name="He X."/>
            <person name="Fang L."/>
            <person name="Zhang Z."/>
            <person name="Zhang Y."/>
            <person name="Huang X."/>
            <person name="Su Z."/>
            <person name="Tong W."/>
            <person name="Li J."/>
            <person name="Tong Z."/>
            <person name="Li S."/>
            <person name="Ye J."/>
            <person name="Wang L."/>
            <person name="Fang L."/>
            <person name="Lei T."/>
            <person name="Chen C.-S."/>
            <person name="Chen H.-C."/>
            <person name="Xu Z."/>
            <person name="Li H."/>
            <person name="Huang H."/>
            <person name="Zhang F."/>
            <person name="Xu H."/>
            <person name="Li N."/>
            <person name="Zhao C."/>
            <person name="Li S."/>
            <person name="Dong L."/>
            <person name="Huang Y."/>
            <person name="Li L."/>
            <person name="Xi Y."/>
            <person name="Qi Q."/>
            <person name="Li W."/>
            <person name="Zhang B."/>
            <person name="Hu W."/>
            <person name="Zhang Y."/>
            <person name="Tian X."/>
            <person name="Jiao Y."/>
            <person name="Liang X."/>
            <person name="Jin J."/>
            <person name="Gao L."/>
            <person name="Zheng W."/>
            <person name="Hao B."/>
            <person name="Liu S.-M."/>
            <person name="Wang W."/>
            <person name="Yuan L."/>
            <person name="Cao M."/>
            <person name="McDermott J."/>
            <person name="Samudrala R."/>
            <person name="Wang J."/>
            <person name="Wong G.K.-S."/>
            <person name="Yang H."/>
        </authorList>
    </citation>
    <scope>NUCLEOTIDE SEQUENCE [LARGE SCALE GENOMIC DNA]</scope>
    <source>
        <strain>cv. Nipponbare</strain>
    </source>
</reference>
<reference key="7">
    <citation type="journal article" date="2003" name="Science">
        <title>Collection, mapping, and annotation of over 28,000 cDNA clones from japonica rice.</title>
        <authorList>
            <consortium name="The rice full-length cDNA consortium"/>
        </authorList>
    </citation>
    <scope>NUCLEOTIDE SEQUENCE [LARGE SCALE MRNA]</scope>
    <source>
        <strain>cv. Nipponbare</strain>
    </source>
</reference>
<reference key="8">
    <citation type="journal article" date="2013" name="Plant Cell Environ.">
        <title>Unravelling mitochondrial retrograde regulation in the abiotic stress induction of rice ALTERNATIVE OXIDASE 1 genes.</title>
        <authorList>
            <person name="Li C.R."/>
            <person name="Liang D.D."/>
            <person name="Li J."/>
            <person name="Duan Y.B."/>
            <person name="Li H."/>
            <person name="Yang Y.C."/>
            <person name="Qin R.Y."/>
            <person name="Li L."/>
            <person name="Wei P.C."/>
            <person name="Yang J.B."/>
        </authorList>
    </citation>
    <scope>INDUCTION</scope>
</reference>
<name>AOX1B_ORYSJ</name>
<evidence type="ECO:0000250" key="1">
    <source>
        <dbReference type="UniProtKB" id="Q26710"/>
    </source>
</evidence>
<evidence type="ECO:0000250" key="2">
    <source>
        <dbReference type="UniProtKB" id="Q39219"/>
    </source>
</evidence>
<evidence type="ECO:0000255" key="3"/>
<evidence type="ECO:0000269" key="4">
    <source>
    </source>
</evidence>
<evidence type="ECO:0000303" key="5">
    <source>
    </source>
</evidence>
<evidence type="ECO:0000305" key="6"/>
<evidence type="ECO:0000312" key="7">
    <source>
        <dbReference type="EMBL" id="BAF15673.1"/>
    </source>
</evidence>
<evidence type="ECO:0000312" key="8">
    <source>
        <dbReference type="EMBL" id="CAE03472.2"/>
    </source>
</evidence>
<evidence type="ECO:0000312" key="9">
    <source>
        <dbReference type="EMBL" id="EAZ31868.1"/>
    </source>
</evidence>
<feature type="transit peptide" description="Mitochondrion" evidence="3">
    <location>
        <begin position="1"/>
        <end position="47"/>
    </location>
</feature>
<feature type="chain" id="PRO_0000440571" description="Ubiquinol oxidase 1b, mitochondrial">
    <location>
        <begin position="48"/>
        <end position="335"/>
    </location>
</feature>
<feature type="transmembrane region" description="Helical" evidence="3">
    <location>
        <begin position="160"/>
        <end position="180"/>
    </location>
</feature>
<feature type="transmembrane region" description="Helical" evidence="3">
    <location>
        <begin position="222"/>
        <end position="242"/>
    </location>
</feature>
<feature type="binding site" evidence="1">
    <location>
        <position position="164"/>
    </location>
    <ligand>
        <name>Fe cation</name>
        <dbReference type="ChEBI" id="CHEBI:24875"/>
        <label>1</label>
    </ligand>
</feature>
<feature type="binding site" evidence="1">
    <location>
        <position position="203"/>
    </location>
    <ligand>
        <name>Fe cation</name>
        <dbReference type="ChEBI" id="CHEBI:24875"/>
        <label>1</label>
    </ligand>
</feature>
<feature type="binding site" evidence="1">
    <location>
        <position position="203"/>
    </location>
    <ligand>
        <name>Fe cation</name>
        <dbReference type="ChEBI" id="CHEBI:24875"/>
        <label>2</label>
    </ligand>
</feature>
<feature type="binding site" evidence="1">
    <location>
        <position position="206"/>
    </location>
    <ligand>
        <name>Fe cation</name>
        <dbReference type="ChEBI" id="CHEBI:24875"/>
        <label>1</label>
    </ligand>
</feature>
<feature type="binding site" evidence="1">
    <location>
        <position position="254"/>
    </location>
    <ligand>
        <name>Fe cation</name>
        <dbReference type="ChEBI" id="CHEBI:24875"/>
        <label>2</label>
    </ligand>
</feature>
<feature type="binding site" evidence="1">
    <location>
        <position position="305"/>
    </location>
    <ligand>
        <name>Fe cation</name>
        <dbReference type="ChEBI" id="CHEBI:24875"/>
        <label>1</label>
    </ligand>
</feature>
<feature type="binding site" evidence="1">
    <location>
        <position position="305"/>
    </location>
    <ligand>
        <name>Fe cation</name>
        <dbReference type="ChEBI" id="CHEBI:24875"/>
        <label>2</label>
    </ligand>
</feature>
<feature type="binding site" evidence="1">
    <location>
        <position position="308"/>
    </location>
    <ligand>
        <name>Fe cation</name>
        <dbReference type="ChEBI" id="CHEBI:24875"/>
        <label>2</label>
    </ligand>
</feature>
<keyword id="KW-0249">Electron transport</keyword>
<keyword id="KW-0408">Iron</keyword>
<keyword id="KW-0472">Membrane</keyword>
<keyword id="KW-0479">Metal-binding</keyword>
<keyword id="KW-0496">Mitochondrion</keyword>
<keyword id="KW-0999">Mitochondrion inner membrane</keyword>
<keyword id="KW-0560">Oxidoreductase</keyword>
<keyword id="KW-1185">Reference proteome</keyword>
<keyword id="KW-0679">Respiratory chain</keyword>
<keyword id="KW-0809">Transit peptide</keyword>
<keyword id="KW-0812">Transmembrane</keyword>
<keyword id="KW-1133">Transmembrane helix</keyword>
<keyword id="KW-0813">Transport</keyword>
<organism>
    <name type="scientific">Oryza sativa subsp. japonica</name>
    <name type="common">Rice</name>
    <dbReference type="NCBI Taxonomy" id="39947"/>
    <lineage>
        <taxon>Eukaryota</taxon>
        <taxon>Viridiplantae</taxon>
        <taxon>Streptophyta</taxon>
        <taxon>Embryophyta</taxon>
        <taxon>Tracheophyta</taxon>
        <taxon>Spermatophyta</taxon>
        <taxon>Magnoliopsida</taxon>
        <taxon>Liliopsida</taxon>
        <taxon>Poales</taxon>
        <taxon>Poaceae</taxon>
        <taxon>BOP clade</taxon>
        <taxon>Oryzoideae</taxon>
        <taxon>Oryzeae</taxon>
        <taxon>Oryzinae</taxon>
        <taxon>Oryza</taxon>
        <taxon>Oryza sativa</taxon>
    </lineage>
</organism>
<proteinExistence type="evidence at transcript level"/>